<comment type="function">
    <text evidence="1">Catalyzes the prenylation of para-hydroxybenzoate (PHB) with an all-trans polyprenyl group. Mediates the second step in the final reaction sequence of ubiquinone-8 (UQ-8) biosynthesis, which is the condensation of the polyisoprenoid side chain with PHB, generating the first membrane-bound Q intermediate 3-octaprenyl-4-hydroxybenzoate.</text>
</comment>
<comment type="catalytic activity">
    <reaction evidence="1">
        <text>all-trans-octaprenyl diphosphate + 4-hydroxybenzoate = 4-hydroxy-3-(all-trans-octaprenyl)benzoate + diphosphate</text>
        <dbReference type="Rhea" id="RHEA:27782"/>
        <dbReference type="ChEBI" id="CHEBI:1617"/>
        <dbReference type="ChEBI" id="CHEBI:17879"/>
        <dbReference type="ChEBI" id="CHEBI:33019"/>
        <dbReference type="ChEBI" id="CHEBI:57711"/>
        <dbReference type="EC" id="2.5.1.39"/>
    </reaction>
</comment>
<comment type="cofactor">
    <cofactor evidence="1">
        <name>Mg(2+)</name>
        <dbReference type="ChEBI" id="CHEBI:18420"/>
    </cofactor>
</comment>
<comment type="pathway">
    <text evidence="1">Cofactor biosynthesis; ubiquinone biosynthesis.</text>
</comment>
<comment type="subcellular location">
    <subcellularLocation>
        <location evidence="1">Cell inner membrane</location>
        <topology evidence="1">Multi-pass membrane protein</topology>
    </subcellularLocation>
</comment>
<comment type="similarity">
    <text evidence="1">Belongs to the UbiA prenyltransferase family.</text>
</comment>
<protein>
    <recommendedName>
        <fullName evidence="1">4-hydroxybenzoate octaprenyltransferase</fullName>
        <ecNumber evidence="1">2.5.1.39</ecNumber>
    </recommendedName>
    <alternativeName>
        <fullName evidence="1">4-HB polyprenyltransferase</fullName>
    </alternativeName>
</protein>
<feature type="chain" id="PRO_0000336973" description="4-hydroxybenzoate octaprenyltransferase">
    <location>
        <begin position="1"/>
        <end position="287"/>
    </location>
</feature>
<feature type="transmembrane region" description="Helical" evidence="1">
    <location>
        <begin position="19"/>
        <end position="39"/>
    </location>
</feature>
<feature type="transmembrane region" description="Helical" evidence="1">
    <location>
        <begin position="43"/>
        <end position="63"/>
    </location>
</feature>
<feature type="transmembrane region" description="Helical" evidence="1">
    <location>
        <begin position="94"/>
        <end position="116"/>
    </location>
</feature>
<feature type="transmembrane region" description="Helical" evidence="1">
    <location>
        <begin position="135"/>
        <end position="155"/>
    </location>
</feature>
<feature type="transmembrane region" description="Helical" evidence="1">
    <location>
        <begin position="160"/>
        <end position="180"/>
    </location>
</feature>
<feature type="transmembrane region" description="Helical" evidence="1">
    <location>
        <begin position="207"/>
        <end position="227"/>
    </location>
</feature>
<feature type="transmembrane region" description="Helical" evidence="1">
    <location>
        <begin position="234"/>
        <end position="254"/>
    </location>
</feature>
<feature type="transmembrane region" description="Helical" evidence="1">
    <location>
        <begin position="269"/>
        <end position="286"/>
    </location>
</feature>
<reference key="1">
    <citation type="journal article" date="2006" name="Nat. Biotechnol.">
        <title>Complete genome of the mutualistic, N2-fixing grass endophyte Azoarcus sp. strain BH72.</title>
        <authorList>
            <person name="Krause A."/>
            <person name="Ramakumar A."/>
            <person name="Bartels D."/>
            <person name="Battistoni F."/>
            <person name="Bekel T."/>
            <person name="Boch J."/>
            <person name="Boehm M."/>
            <person name="Friedrich F."/>
            <person name="Hurek T."/>
            <person name="Krause L."/>
            <person name="Linke B."/>
            <person name="McHardy A.C."/>
            <person name="Sarkar A."/>
            <person name="Schneiker S."/>
            <person name="Syed A.A."/>
            <person name="Thauer R."/>
            <person name="Vorhoelter F.-J."/>
            <person name="Weidner S."/>
            <person name="Puehler A."/>
            <person name="Reinhold-Hurek B."/>
            <person name="Kaiser O."/>
            <person name="Goesmann A."/>
        </authorList>
    </citation>
    <scope>NUCLEOTIDE SEQUENCE [LARGE SCALE GENOMIC DNA]</scope>
    <source>
        <strain>BH72</strain>
    </source>
</reference>
<organism>
    <name type="scientific">Azoarcus sp. (strain BH72)</name>
    <dbReference type="NCBI Taxonomy" id="418699"/>
    <lineage>
        <taxon>Bacteria</taxon>
        <taxon>Pseudomonadati</taxon>
        <taxon>Pseudomonadota</taxon>
        <taxon>Betaproteobacteria</taxon>
        <taxon>Rhodocyclales</taxon>
        <taxon>Zoogloeaceae</taxon>
        <taxon>Azoarcus</taxon>
    </lineage>
</organism>
<gene>
    <name evidence="1" type="primary">ubiA</name>
    <name type="ordered locus">azo0479</name>
</gene>
<sequence length="287" mass="31396">MTLSDRLPLYGRLMRLDKPIGSLLLLWPTLWALWLAADGKPPLHVLVIFTIGTVLMRSAGCVINDYADRDFDGHVERTRNRPLATRAVSTREALALAAGLSALSFVLILPLDPLVIWLSFPALFLAASYPFTKRFFAIPQAYLGIAFGFGIPMGFAAVQGEVPPIAWVMLLANIFWAVAYDTEYAMVDRPDDLKIGIKTSAITFGRFDVAAVMLCYAVALGLLGWVGAQAGRGALYFAGLAVAAGMALYHYTLIRHRERAPCFKAFRHNNWLGAAVFAGLALDYLIG</sequence>
<keyword id="KW-0997">Cell inner membrane</keyword>
<keyword id="KW-1003">Cell membrane</keyword>
<keyword id="KW-0460">Magnesium</keyword>
<keyword id="KW-0472">Membrane</keyword>
<keyword id="KW-1185">Reference proteome</keyword>
<keyword id="KW-0808">Transferase</keyword>
<keyword id="KW-0812">Transmembrane</keyword>
<keyword id="KW-1133">Transmembrane helix</keyword>
<keyword id="KW-0831">Ubiquinone biosynthesis</keyword>
<evidence type="ECO:0000255" key="1">
    <source>
        <dbReference type="HAMAP-Rule" id="MF_01635"/>
    </source>
</evidence>
<name>UBIA_AZOSB</name>
<dbReference type="EC" id="2.5.1.39" evidence="1"/>
<dbReference type="EMBL" id="AM406670">
    <property type="protein sequence ID" value="CAL93096.1"/>
    <property type="molecule type" value="Genomic_DNA"/>
</dbReference>
<dbReference type="RefSeq" id="WP_011764214.1">
    <property type="nucleotide sequence ID" value="NC_008702.1"/>
</dbReference>
<dbReference type="SMR" id="A1K2P1"/>
<dbReference type="STRING" id="62928.azo0479"/>
<dbReference type="KEGG" id="azo:azo0479"/>
<dbReference type="eggNOG" id="COG0382">
    <property type="taxonomic scope" value="Bacteria"/>
</dbReference>
<dbReference type="HOGENOM" id="CLU_034879_1_0_4"/>
<dbReference type="UniPathway" id="UPA00232"/>
<dbReference type="Proteomes" id="UP000002588">
    <property type="component" value="Chromosome"/>
</dbReference>
<dbReference type="GO" id="GO:0005886">
    <property type="term" value="C:plasma membrane"/>
    <property type="evidence" value="ECO:0007669"/>
    <property type="project" value="UniProtKB-SubCell"/>
</dbReference>
<dbReference type="GO" id="GO:0008412">
    <property type="term" value="F:4-hydroxybenzoate polyprenyltransferase activity"/>
    <property type="evidence" value="ECO:0007669"/>
    <property type="project" value="UniProtKB-UniRule"/>
</dbReference>
<dbReference type="GO" id="GO:0006744">
    <property type="term" value="P:ubiquinone biosynthetic process"/>
    <property type="evidence" value="ECO:0007669"/>
    <property type="project" value="UniProtKB-UniRule"/>
</dbReference>
<dbReference type="CDD" id="cd13959">
    <property type="entry name" value="PT_UbiA_COQ2"/>
    <property type="match status" value="1"/>
</dbReference>
<dbReference type="FunFam" id="1.10.357.140:FF:000002">
    <property type="entry name" value="4-hydroxybenzoate octaprenyltransferase"/>
    <property type="match status" value="1"/>
</dbReference>
<dbReference type="FunFam" id="1.20.120.1780:FF:000001">
    <property type="entry name" value="4-hydroxybenzoate octaprenyltransferase"/>
    <property type="match status" value="1"/>
</dbReference>
<dbReference type="Gene3D" id="1.10.357.140">
    <property type="entry name" value="UbiA prenyltransferase"/>
    <property type="match status" value="1"/>
</dbReference>
<dbReference type="Gene3D" id="1.20.120.1780">
    <property type="entry name" value="UbiA prenyltransferase"/>
    <property type="match status" value="1"/>
</dbReference>
<dbReference type="HAMAP" id="MF_01635">
    <property type="entry name" value="UbiA"/>
    <property type="match status" value="1"/>
</dbReference>
<dbReference type="InterPro" id="IPR006370">
    <property type="entry name" value="HB_polyprenyltransferase-like"/>
</dbReference>
<dbReference type="InterPro" id="IPR039653">
    <property type="entry name" value="Prenyltransferase"/>
</dbReference>
<dbReference type="InterPro" id="IPR000537">
    <property type="entry name" value="UbiA_prenyltransferase"/>
</dbReference>
<dbReference type="InterPro" id="IPR030470">
    <property type="entry name" value="UbiA_prenylTrfase_CS"/>
</dbReference>
<dbReference type="InterPro" id="IPR044878">
    <property type="entry name" value="UbiA_sf"/>
</dbReference>
<dbReference type="NCBIfam" id="TIGR01474">
    <property type="entry name" value="ubiA_proteo"/>
    <property type="match status" value="1"/>
</dbReference>
<dbReference type="PANTHER" id="PTHR11048:SF28">
    <property type="entry name" value="4-HYDROXYBENZOATE POLYPRENYLTRANSFERASE, MITOCHONDRIAL"/>
    <property type="match status" value="1"/>
</dbReference>
<dbReference type="PANTHER" id="PTHR11048">
    <property type="entry name" value="PRENYLTRANSFERASES"/>
    <property type="match status" value="1"/>
</dbReference>
<dbReference type="Pfam" id="PF01040">
    <property type="entry name" value="UbiA"/>
    <property type="match status" value="1"/>
</dbReference>
<dbReference type="PROSITE" id="PS00943">
    <property type="entry name" value="UBIA"/>
    <property type="match status" value="1"/>
</dbReference>
<accession>A1K2P1</accession>
<proteinExistence type="inferred from homology"/>